<feature type="chain" id="PRO_0000118956" description="Exocyst complex component 6">
    <location>
        <begin position="1"/>
        <end position="766"/>
    </location>
</feature>
<feature type="coiled-coil region" evidence="2">
    <location>
        <begin position="28"/>
        <end position="90"/>
    </location>
</feature>
<feature type="mutagenesis site" description="Disrupts interaction with RAB11." evidence="3">
    <original>N</original>
    <variation>A</variation>
    <location>
        <position position="659"/>
    </location>
</feature>
<feature type="mutagenesis site" description="Disrupts interaction with RAB11." evidence="3">
    <original>M</original>
    <variation>A</variation>
    <location>
        <position position="663"/>
    </location>
</feature>
<feature type="mutagenesis site" description="Disrupts interaction with RAB11." evidence="3">
    <original>F</original>
    <variation>A</variation>
    <location>
        <position position="667"/>
    </location>
</feature>
<feature type="helix" evidence="6">
    <location>
        <begin position="384"/>
        <end position="415"/>
    </location>
</feature>
<feature type="helix" evidence="6">
    <location>
        <begin position="425"/>
        <end position="432"/>
    </location>
</feature>
<feature type="strand" evidence="6">
    <location>
        <begin position="451"/>
        <end position="454"/>
    </location>
</feature>
<feature type="helix" evidence="6">
    <location>
        <begin position="456"/>
        <end position="477"/>
    </location>
</feature>
<feature type="helix" evidence="6">
    <location>
        <begin position="482"/>
        <end position="509"/>
    </location>
</feature>
<feature type="helix" evidence="6">
    <location>
        <begin position="516"/>
        <end position="530"/>
    </location>
</feature>
<feature type="helix" evidence="6">
    <location>
        <begin position="533"/>
        <end position="544"/>
    </location>
</feature>
<feature type="helix" evidence="6">
    <location>
        <begin position="564"/>
        <end position="581"/>
    </location>
</feature>
<feature type="helix" evidence="6">
    <location>
        <begin position="599"/>
        <end position="613"/>
    </location>
</feature>
<feature type="turn" evidence="6">
    <location>
        <begin position="614"/>
        <end position="618"/>
    </location>
</feature>
<feature type="helix" evidence="6">
    <location>
        <begin position="620"/>
        <end position="642"/>
    </location>
</feature>
<feature type="helix" evidence="6">
    <location>
        <begin position="655"/>
        <end position="669"/>
    </location>
</feature>
<feature type="strand" evidence="6">
    <location>
        <begin position="673"/>
        <end position="676"/>
    </location>
</feature>
<feature type="helix" evidence="6">
    <location>
        <begin position="683"/>
        <end position="686"/>
    </location>
</feature>
<feature type="helix" evidence="6">
    <location>
        <begin position="687"/>
        <end position="697"/>
    </location>
</feature>
<gene>
    <name evidence="5" type="primary">Sec15</name>
    <name evidence="5" type="ORF">CG7034</name>
</gene>
<accession>Q9VDE6</accession>
<accession>Q53YF7</accession>
<organism>
    <name type="scientific">Drosophila melanogaster</name>
    <name type="common">Fruit fly</name>
    <dbReference type="NCBI Taxonomy" id="7227"/>
    <lineage>
        <taxon>Eukaryota</taxon>
        <taxon>Metazoa</taxon>
        <taxon>Ecdysozoa</taxon>
        <taxon>Arthropoda</taxon>
        <taxon>Hexapoda</taxon>
        <taxon>Insecta</taxon>
        <taxon>Pterygota</taxon>
        <taxon>Neoptera</taxon>
        <taxon>Endopterygota</taxon>
        <taxon>Diptera</taxon>
        <taxon>Brachycera</taxon>
        <taxon>Muscomorpha</taxon>
        <taxon>Ephydroidea</taxon>
        <taxon>Drosophilidae</taxon>
        <taxon>Drosophila</taxon>
        <taxon>Sophophora</taxon>
    </lineage>
</organism>
<comment type="function">
    <text evidence="1">Component of the exocyst complex involved in the docking of exocytic vesicles with fusion sites on the plasma membrane.</text>
</comment>
<comment type="subunit">
    <text evidence="1 3">The exocyst complex is composed of Sec3/Exoc1, Sec5/Exoc2, Sec6/Exoc3, Sec8/Exoc4, Sec10/Exoc5, Sec15/Exoc6, Exo70/Exoc7 and Exo84/Exoc8 (By similarity). Interacts with RAB3, RAB8, RAB11 and RAB27.</text>
</comment>
<comment type="subcellular location">
    <subcellularLocation>
        <location evidence="3">Cell projection</location>
        <location evidence="3">Rhabdomere</location>
    </subcellularLocation>
</comment>
<comment type="tissue specificity">
    <text evidence="3">Detected in developing rhabdomeres in photoreceptor cells.</text>
</comment>
<comment type="similarity">
    <text evidence="4">Belongs to the SEC15 family.</text>
</comment>
<protein>
    <recommendedName>
        <fullName>Exocyst complex component 6</fullName>
    </recommendedName>
    <alternativeName>
        <fullName>Exocyst complex component Sec15</fullName>
    </alternativeName>
</protein>
<proteinExistence type="evidence at protein level"/>
<reference key="1">
    <citation type="journal article" date="2000" name="Science">
        <title>The genome sequence of Drosophila melanogaster.</title>
        <authorList>
            <person name="Adams M.D."/>
            <person name="Celniker S.E."/>
            <person name="Holt R.A."/>
            <person name="Evans C.A."/>
            <person name="Gocayne J.D."/>
            <person name="Amanatides P.G."/>
            <person name="Scherer S.E."/>
            <person name="Li P.W."/>
            <person name="Hoskins R.A."/>
            <person name="Galle R.F."/>
            <person name="George R.A."/>
            <person name="Lewis S.E."/>
            <person name="Richards S."/>
            <person name="Ashburner M."/>
            <person name="Henderson S.N."/>
            <person name="Sutton G.G."/>
            <person name="Wortman J.R."/>
            <person name="Yandell M.D."/>
            <person name="Zhang Q."/>
            <person name="Chen L.X."/>
            <person name="Brandon R.C."/>
            <person name="Rogers Y.-H.C."/>
            <person name="Blazej R.G."/>
            <person name="Champe M."/>
            <person name="Pfeiffer B.D."/>
            <person name="Wan K.H."/>
            <person name="Doyle C."/>
            <person name="Baxter E.G."/>
            <person name="Helt G."/>
            <person name="Nelson C.R."/>
            <person name="Miklos G.L.G."/>
            <person name="Abril J.F."/>
            <person name="Agbayani A."/>
            <person name="An H.-J."/>
            <person name="Andrews-Pfannkoch C."/>
            <person name="Baldwin D."/>
            <person name="Ballew R.M."/>
            <person name="Basu A."/>
            <person name="Baxendale J."/>
            <person name="Bayraktaroglu L."/>
            <person name="Beasley E.M."/>
            <person name="Beeson K.Y."/>
            <person name="Benos P.V."/>
            <person name="Berman B.P."/>
            <person name="Bhandari D."/>
            <person name="Bolshakov S."/>
            <person name="Borkova D."/>
            <person name="Botchan M.R."/>
            <person name="Bouck J."/>
            <person name="Brokstein P."/>
            <person name="Brottier P."/>
            <person name="Burtis K.C."/>
            <person name="Busam D.A."/>
            <person name="Butler H."/>
            <person name="Cadieu E."/>
            <person name="Center A."/>
            <person name="Chandra I."/>
            <person name="Cherry J.M."/>
            <person name="Cawley S."/>
            <person name="Dahlke C."/>
            <person name="Davenport L.B."/>
            <person name="Davies P."/>
            <person name="de Pablos B."/>
            <person name="Delcher A."/>
            <person name="Deng Z."/>
            <person name="Mays A.D."/>
            <person name="Dew I."/>
            <person name="Dietz S.M."/>
            <person name="Dodson K."/>
            <person name="Doup L.E."/>
            <person name="Downes M."/>
            <person name="Dugan-Rocha S."/>
            <person name="Dunkov B.C."/>
            <person name="Dunn P."/>
            <person name="Durbin K.J."/>
            <person name="Evangelista C.C."/>
            <person name="Ferraz C."/>
            <person name="Ferriera S."/>
            <person name="Fleischmann W."/>
            <person name="Fosler C."/>
            <person name="Gabrielian A.E."/>
            <person name="Garg N.S."/>
            <person name="Gelbart W.M."/>
            <person name="Glasser K."/>
            <person name="Glodek A."/>
            <person name="Gong F."/>
            <person name="Gorrell J.H."/>
            <person name="Gu Z."/>
            <person name="Guan P."/>
            <person name="Harris M."/>
            <person name="Harris N.L."/>
            <person name="Harvey D.A."/>
            <person name="Heiman T.J."/>
            <person name="Hernandez J.R."/>
            <person name="Houck J."/>
            <person name="Hostin D."/>
            <person name="Houston K.A."/>
            <person name="Howland T.J."/>
            <person name="Wei M.-H."/>
            <person name="Ibegwam C."/>
            <person name="Jalali M."/>
            <person name="Kalush F."/>
            <person name="Karpen G.H."/>
            <person name="Ke Z."/>
            <person name="Kennison J.A."/>
            <person name="Ketchum K.A."/>
            <person name="Kimmel B.E."/>
            <person name="Kodira C.D."/>
            <person name="Kraft C.L."/>
            <person name="Kravitz S."/>
            <person name="Kulp D."/>
            <person name="Lai Z."/>
            <person name="Lasko P."/>
            <person name="Lei Y."/>
            <person name="Levitsky A.A."/>
            <person name="Li J.H."/>
            <person name="Li Z."/>
            <person name="Liang Y."/>
            <person name="Lin X."/>
            <person name="Liu X."/>
            <person name="Mattei B."/>
            <person name="McIntosh T.C."/>
            <person name="McLeod M.P."/>
            <person name="McPherson D."/>
            <person name="Merkulov G."/>
            <person name="Milshina N.V."/>
            <person name="Mobarry C."/>
            <person name="Morris J."/>
            <person name="Moshrefi A."/>
            <person name="Mount S.M."/>
            <person name="Moy M."/>
            <person name="Murphy B."/>
            <person name="Murphy L."/>
            <person name="Muzny D.M."/>
            <person name="Nelson D.L."/>
            <person name="Nelson D.R."/>
            <person name="Nelson K.A."/>
            <person name="Nixon K."/>
            <person name="Nusskern D.R."/>
            <person name="Pacleb J.M."/>
            <person name="Palazzolo M."/>
            <person name="Pittman G.S."/>
            <person name="Pan S."/>
            <person name="Pollard J."/>
            <person name="Puri V."/>
            <person name="Reese M.G."/>
            <person name="Reinert K."/>
            <person name="Remington K."/>
            <person name="Saunders R.D.C."/>
            <person name="Scheeler F."/>
            <person name="Shen H."/>
            <person name="Shue B.C."/>
            <person name="Siden-Kiamos I."/>
            <person name="Simpson M."/>
            <person name="Skupski M.P."/>
            <person name="Smith T.J."/>
            <person name="Spier E."/>
            <person name="Spradling A.C."/>
            <person name="Stapleton M."/>
            <person name="Strong R."/>
            <person name="Sun E."/>
            <person name="Svirskas R."/>
            <person name="Tector C."/>
            <person name="Turner R."/>
            <person name="Venter E."/>
            <person name="Wang A.H."/>
            <person name="Wang X."/>
            <person name="Wang Z.-Y."/>
            <person name="Wassarman D.A."/>
            <person name="Weinstock G.M."/>
            <person name="Weissenbach J."/>
            <person name="Williams S.M."/>
            <person name="Woodage T."/>
            <person name="Worley K.C."/>
            <person name="Wu D."/>
            <person name="Yang S."/>
            <person name="Yao Q.A."/>
            <person name="Ye J."/>
            <person name="Yeh R.-F."/>
            <person name="Zaveri J.S."/>
            <person name="Zhan M."/>
            <person name="Zhang G."/>
            <person name="Zhao Q."/>
            <person name="Zheng L."/>
            <person name="Zheng X.H."/>
            <person name="Zhong F.N."/>
            <person name="Zhong W."/>
            <person name="Zhou X."/>
            <person name="Zhu S.C."/>
            <person name="Zhu X."/>
            <person name="Smith H.O."/>
            <person name="Gibbs R.A."/>
            <person name="Myers E.W."/>
            <person name="Rubin G.M."/>
            <person name="Venter J.C."/>
        </authorList>
    </citation>
    <scope>NUCLEOTIDE SEQUENCE [LARGE SCALE GENOMIC DNA]</scope>
    <source>
        <strain>Berkeley</strain>
    </source>
</reference>
<reference key="2">
    <citation type="journal article" date="2002" name="Genome Biol.">
        <title>Annotation of the Drosophila melanogaster euchromatic genome: a systematic review.</title>
        <authorList>
            <person name="Misra S."/>
            <person name="Crosby M.A."/>
            <person name="Mungall C.J."/>
            <person name="Matthews B.B."/>
            <person name="Campbell K.S."/>
            <person name="Hradecky P."/>
            <person name="Huang Y."/>
            <person name="Kaminker J.S."/>
            <person name="Millburn G.H."/>
            <person name="Prochnik S.E."/>
            <person name="Smith C.D."/>
            <person name="Tupy J.L."/>
            <person name="Whitfield E.J."/>
            <person name="Bayraktaroglu L."/>
            <person name="Berman B.P."/>
            <person name="Bettencourt B.R."/>
            <person name="Celniker S.E."/>
            <person name="de Grey A.D.N.J."/>
            <person name="Drysdale R.A."/>
            <person name="Harris N.L."/>
            <person name="Richter J."/>
            <person name="Russo S."/>
            <person name="Schroeder A.J."/>
            <person name="Shu S.Q."/>
            <person name="Stapleton M."/>
            <person name="Yamada C."/>
            <person name="Ashburner M."/>
            <person name="Gelbart W.M."/>
            <person name="Rubin G.M."/>
            <person name="Lewis S.E."/>
        </authorList>
    </citation>
    <scope>GENOME REANNOTATION</scope>
    <source>
        <strain>Berkeley</strain>
    </source>
</reference>
<reference key="3">
    <citation type="submission" date="2003-02" db="EMBL/GenBank/DDBJ databases">
        <authorList>
            <person name="Stapleton M."/>
            <person name="Brokstein P."/>
            <person name="Hong L."/>
            <person name="Agbayani A."/>
            <person name="Carlson J.W."/>
            <person name="Champe M."/>
            <person name="Chavez C."/>
            <person name="Dorsett V."/>
            <person name="Dresnek D."/>
            <person name="Farfan D."/>
            <person name="Frise E."/>
            <person name="George R.A."/>
            <person name="Gonzalez M."/>
            <person name="Guarin H."/>
            <person name="Kronmiller B."/>
            <person name="Li P.W."/>
            <person name="Liao G."/>
            <person name="Miranda A."/>
            <person name="Mungall C.J."/>
            <person name="Nunoo J."/>
            <person name="Pacleb J.M."/>
            <person name="Paragas V."/>
            <person name="Park S."/>
            <person name="Patel S."/>
            <person name="Phouanenavong S."/>
            <person name="Wan K.H."/>
            <person name="Yu C."/>
            <person name="Lewis S.E."/>
            <person name="Rubin G.M."/>
            <person name="Celniker S.E."/>
        </authorList>
    </citation>
    <scope>NUCLEOTIDE SEQUENCE [LARGE SCALE MRNA]</scope>
    <source>
        <strain>Berkeley</strain>
        <tissue>Embryo</tissue>
    </source>
</reference>
<reference key="4">
    <citation type="journal article" date="2005" name="Nat. Struct. Mol. Biol.">
        <title>Sec15 interacts with Rab11 via a novel domain and affects Rab11 localization in vivo.</title>
        <authorList>
            <person name="Wu S."/>
            <person name="Mehta S.Q."/>
            <person name="Pichaud F."/>
            <person name="Bellen H.J."/>
            <person name="Quiocho F.A."/>
        </authorList>
    </citation>
    <scope>X-RAY CRYSTALLOGRAPHY (2.5 ANGSTROMS) OF 382-699</scope>
    <scope>INTERACTION WITH RAB3; RAB8; RAB11 AND RAB27</scope>
    <scope>SUBCELLULAR LOCATION</scope>
    <scope>TISSUE SPECIFICITY</scope>
    <scope>MUTAGENESIS OF ASN-659; MET-663 AND PHE-667</scope>
</reference>
<sequence length="766" mass="88726">MSKVTVQDIEAVDDYWGPTFRSILEGNNTKQIGDQLEQRIRSHDKEIERICNLYYQGFIDSIQELLQVRTQAQQLHNEVHSLDTSLRQISASLIQQGNDLVRARQIESNLASAIEALKSCLPALECYMKFTQQAKNKQYYQALRTLETLETEHLTRLKTHNYRFATQMQIQIPIIKENIRRSSASDFREFLENIRKFSPRIGELAITHTKQLQKRDINAIIAEHMQQMNGGEAGGAGAGGDDDGANVSAQDLIDFSPIYRCLHIYMVLGQREYFEKDYRQQRRDQAKLVLQPPPNMHDNLEAYKTYICAIVGFFVVEDHVKNTAGDVVTSSYLEDLWSSSLTKFVNEISMSSSSCTDPNILLRIKNLIMLSINTFKCYGYTVNILWELLHNMRDHYNEVLLQRWVHVFREILDKEQFLPMVVQNTEEYECIIERFPFHSEQLENAPFPKKFPFSRMVPEVYHQAKEFMYACMKFAEELTLSPNEVAAMVRKAANLLLTRSFSGCLSVVFRQPSITLTQLIQIIIDTQYLEKAGPFLDEFVCHMTNTERSVSQTPSAMFHVARQDAEKQVGLRICSKIDEFFELSAYDWLLVEPPGIASAFITDMISYLKSTFDSFAFKLPHIAQAACRRTFEHIAEKIYSIMYDEDVKQISTGALTQINLDLMQCEFFAASEPVPGLKEGELSKYFLRNRQLLDLLILEEWSTYFHDYGKQENRYHLVQPQSIIVILEKIREADKKPIFSLVRKNDKKKLLETVLKQLKHIADRQN</sequence>
<dbReference type="EMBL" id="AE014297">
    <property type="protein sequence ID" value="AAF55848.1"/>
    <property type="molecule type" value="Genomic_DNA"/>
</dbReference>
<dbReference type="EMBL" id="BT003492">
    <property type="protein sequence ID" value="AAO39495.1"/>
    <property type="molecule type" value="mRNA"/>
</dbReference>
<dbReference type="RefSeq" id="NP_650942.1">
    <property type="nucleotide sequence ID" value="NM_142685.3"/>
</dbReference>
<dbReference type="PDB" id="2A2F">
    <property type="method" value="X-ray"/>
    <property type="resolution" value="2.50 A"/>
    <property type="chains" value="X=382-699"/>
</dbReference>
<dbReference type="PDBsum" id="2A2F"/>
<dbReference type="SMR" id="Q9VDE6"/>
<dbReference type="BioGRID" id="67470">
    <property type="interactions" value="12"/>
</dbReference>
<dbReference type="ComplexPortal" id="CPX-2465">
    <property type="entry name" value="Exocyst"/>
</dbReference>
<dbReference type="DIP" id="DIP-24010N"/>
<dbReference type="FunCoup" id="Q9VDE6">
    <property type="interactions" value="1762"/>
</dbReference>
<dbReference type="IntAct" id="Q9VDE6">
    <property type="interactions" value="2"/>
</dbReference>
<dbReference type="STRING" id="7227.FBpp0083436"/>
<dbReference type="PaxDb" id="7227-FBpp0083436"/>
<dbReference type="DNASU" id="42499"/>
<dbReference type="EnsemblMetazoa" id="FBtr0084034">
    <property type="protein sequence ID" value="FBpp0083436"/>
    <property type="gene ID" value="FBgn0266674"/>
</dbReference>
<dbReference type="GeneID" id="42499"/>
<dbReference type="KEGG" id="dme:Dmel_CG7034"/>
<dbReference type="UCSC" id="CG7034-RA">
    <property type="organism name" value="d. melanogaster"/>
</dbReference>
<dbReference type="AGR" id="FB:FBgn0266674"/>
<dbReference type="CTD" id="42499"/>
<dbReference type="FlyBase" id="FBgn0266674">
    <property type="gene designation" value="Sec15"/>
</dbReference>
<dbReference type="VEuPathDB" id="VectorBase:FBgn0266674"/>
<dbReference type="eggNOG" id="KOG2176">
    <property type="taxonomic scope" value="Eukaryota"/>
</dbReference>
<dbReference type="GeneTree" id="ENSGT00390000005739"/>
<dbReference type="HOGENOM" id="CLU_009437_0_0_1"/>
<dbReference type="InParanoid" id="Q9VDE6"/>
<dbReference type="OMA" id="FPFHSEQ"/>
<dbReference type="OrthoDB" id="10267033at2759"/>
<dbReference type="PhylomeDB" id="Q9VDE6"/>
<dbReference type="Reactome" id="R-DME-264876">
    <property type="pathway name" value="Insulin processing"/>
</dbReference>
<dbReference type="Reactome" id="R-DME-5620916">
    <property type="pathway name" value="VxPx cargo-targeting to cilium"/>
</dbReference>
<dbReference type="BioGRID-ORCS" id="42499">
    <property type="hits" value="0 hits in 3 CRISPR screens"/>
</dbReference>
<dbReference type="EvolutionaryTrace" id="Q9VDE6"/>
<dbReference type="GenomeRNAi" id="42499"/>
<dbReference type="PRO" id="PR:Q9VDE6"/>
<dbReference type="Proteomes" id="UP000000803">
    <property type="component" value="Chromosome 3R"/>
</dbReference>
<dbReference type="Bgee" id="FBgn0266674">
    <property type="expression patterns" value="Expressed in peripheral glial cell (Drosophila) in insect leg and 76 other cell types or tissues"/>
</dbReference>
<dbReference type="GO" id="GO:0043679">
    <property type="term" value="C:axon terminus"/>
    <property type="evidence" value="ECO:0000314"/>
    <property type="project" value="FlyBase"/>
</dbReference>
<dbReference type="GO" id="GO:0031410">
    <property type="term" value="C:cytoplasmic vesicle"/>
    <property type="evidence" value="ECO:0000314"/>
    <property type="project" value="FlyBase"/>
</dbReference>
<dbReference type="GO" id="GO:0005768">
    <property type="term" value="C:endosome"/>
    <property type="evidence" value="ECO:0000314"/>
    <property type="project" value="FlyBase"/>
</dbReference>
<dbReference type="GO" id="GO:0000145">
    <property type="term" value="C:exocyst"/>
    <property type="evidence" value="ECO:0000314"/>
    <property type="project" value="FlyBase"/>
</dbReference>
<dbReference type="GO" id="GO:0055037">
    <property type="term" value="C:recycling endosome"/>
    <property type="evidence" value="ECO:0000314"/>
    <property type="project" value="FlyBase"/>
</dbReference>
<dbReference type="GO" id="GO:0016028">
    <property type="term" value="C:rhabdomere"/>
    <property type="evidence" value="ECO:0007669"/>
    <property type="project" value="UniProtKB-SubCell"/>
</dbReference>
<dbReference type="GO" id="GO:0031267">
    <property type="term" value="F:small GTPase binding"/>
    <property type="evidence" value="ECO:0000353"/>
    <property type="project" value="FlyBase"/>
</dbReference>
<dbReference type="GO" id="GO:0007411">
    <property type="term" value="P:axon guidance"/>
    <property type="evidence" value="ECO:0000315"/>
    <property type="project" value="FlyBase"/>
</dbReference>
<dbReference type="GO" id="GO:0007298">
    <property type="term" value="P:border follicle cell migration"/>
    <property type="evidence" value="ECO:0000315"/>
    <property type="project" value="FlyBase"/>
</dbReference>
<dbReference type="GO" id="GO:0022416">
    <property type="term" value="P:chaeta development"/>
    <property type="evidence" value="ECO:0000315"/>
    <property type="project" value="FlyBase"/>
</dbReference>
<dbReference type="GO" id="GO:0032456">
    <property type="term" value="P:endocytic recycling"/>
    <property type="evidence" value="ECO:0000315"/>
    <property type="project" value="FlyBase"/>
</dbReference>
<dbReference type="GO" id="GO:0006887">
    <property type="term" value="P:exocytosis"/>
    <property type="evidence" value="ECO:0000318"/>
    <property type="project" value="GO_Central"/>
</dbReference>
<dbReference type="GO" id="GO:0006893">
    <property type="term" value="P:Golgi to plasma membrane transport"/>
    <property type="evidence" value="ECO:0000318"/>
    <property type="project" value="GO_Central"/>
</dbReference>
<dbReference type="GO" id="GO:0006886">
    <property type="term" value="P:intracellular protein transport"/>
    <property type="evidence" value="ECO:0007669"/>
    <property type="project" value="InterPro"/>
</dbReference>
<dbReference type="GO" id="GO:0042331">
    <property type="term" value="P:phototaxis"/>
    <property type="evidence" value="ECO:0000315"/>
    <property type="project" value="FlyBase"/>
</dbReference>
<dbReference type="GO" id="GO:0072659">
    <property type="term" value="P:protein localization to plasma membrane"/>
    <property type="evidence" value="ECO:0000315"/>
    <property type="project" value="FlyBase"/>
</dbReference>
<dbReference type="GO" id="GO:0090522">
    <property type="term" value="P:vesicle tethering involved in exocytosis"/>
    <property type="evidence" value="ECO:0000305"/>
    <property type="project" value="FlyBase"/>
</dbReference>
<dbReference type="GO" id="GO:0016192">
    <property type="term" value="P:vesicle-mediated transport"/>
    <property type="evidence" value="ECO:0000315"/>
    <property type="project" value="FlyBase"/>
</dbReference>
<dbReference type="FunFam" id="1.10.357.30:FF:000003">
    <property type="entry name" value="Exocyst complex component"/>
    <property type="match status" value="1"/>
</dbReference>
<dbReference type="FunFam" id="1.20.58.670:FF:000002">
    <property type="entry name" value="Exocyst complex component"/>
    <property type="match status" value="1"/>
</dbReference>
<dbReference type="Gene3D" id="1.20.58.670">
    <property type="entry name" value="Dsl1p vesicle tethering complex, Tip20p subunit, domain D"/>
    <property type="match status" value="1"/>
</dbReference>
<dbReference type="Gene3D" id="1.10.357.30">
    <property type="entry name" value="Exocyst complex subunit Sec15 C-terminal domain, N-terminal subdomain"/>
    <property type="match status" value="1"/>
</dbReference>
<dbReference type="InterPro" id="IPR007225">
    <property type="entry name" value="EXOC6/Sec15"/>
</dbReference>
<dbReference type="InterPro" id="IPR046361">
    <property type="entry name" value="EXOC6/Sec15_C"/>
</dbReference>
<dbReference type="InterPro" id="IPR042045">
    <property type="entry name" value="EXOC6/Sec15_C_dom1"/>
</dbReference>
<dbReference type="InterPro" id="IPR048359">
    <property type="entry name" value="EXOC6_Sec15_N"/>
</dbReference>
<dbReference type="InterPro" id="IPR042044">
    <property type="entry name" value="EXOC6PINT-1/Sec15/Tip20_C_dom2"/>
</dbReference>
<dbReference type="PANTHER" id="PTHR12702:SF0">
    <property type="entry name" value="EXOCYST COMPLEX COMPONENT 6"/>
    <property type="match status" value="1"/>
</dbReference>
<dbReference type="PANTHER" id="PTHR12702">
    <property type="entry name" value="SEC15"/>
    <property type="match status" value="1"/>
</dbReference>
<dbReference type="Pfam" id="PF20651">
    <property type="entry name" value="EXOC6_Sec15_N"/>
    <property type="match status" value="1"/>
</dbReference>
<dbReference type="Pfam" id="PF04091">
    <property type="entry name" value="Sec15_C"/>
    <property type="match status" value="1"/>
</dbReference>
<dbReference type="PIRSF" id="PIRSF025007">
    <property type="entry name" value="Sec15"/>
    <property type="match status" value="1"/>
</dbReference>
<evidence type="ECO:0000250" key="1"/>
<evidence type="ECO:0000255" key="2"/>
<evidence type="ECO:0000269" key="3">
    <source>
    </source>
</evidence>
<evidence type="ECO:0000305" key="4"/>
<evidence type="ECO:0000312" key="5">
    <source>
        <dbReference type="FlyBase" id="FBgn0266674"/>
    </source>
</evidence>
<evidence type="ECO:0007829" key="6">
    <source>
        <dbReference type="PDB" id="2A2F"/>
    </source>
</evidence>
<keyword id="KW-0002">3D-structure</keyword>
<keyword id="KW-0966">Cell projection</keyword>
<keyword id="KW-0175">Coiled coil</keyword>
<keyword id="KW-0268">Exocytosis</keyword>
<keyword id="KW-0653">Protein transport</keyword>
<keyword id="KW-1185">Reference proteome</keyword>
<keyword id="KW-0813">Transport</keyword>
<name>EXOC6_DROME</name>